<protein>
    <recommendedName>
        <fullName evidence="15">Protein TIFY 11A</fullName>
    </recommendedName>
    <alternativeName>
        <fullName evidence="16 17">Jasmonate ZIM domain-containing protein 5</fullName>
    </alternativeName>
</protein>
<organism>
    <name type="scientific">Arabidopsis thaliana</name>
    <name type="common">Mouse-ear cress</name>
    <dbReference type="NCBI Taxonomy" id="3702"/>
    <lineage>
        <taxon>Eukaryota</taxon>
        <taxon>Viridiplantae</taxon>
        <taxon>Streptophyta</taxon>
        <taxon>Embryophyta</taxon>
        <taxon>Tracheophyta</taxon>
        <taxon>Spermatophyta</taxon>
        <taxon>Magnoliopsida</taxon>
        <taxon>eudicotyledons</taxon>
        <taxon>Gunneridae</taxon>
        <taxon>Pentapetalae</taxon>
        <taxon>rosids</taxon>
        <taxon>malvids</taxon>
        <taxon>Brassicales</taxon>
        <taxon>Brassicaceae</taxon>
        <taxon>Camelineae</taxon>
        <taxon>Arabidopsis</taxon>
    </lineage>
</organism>
<sequence>MSSSNENAKAQAPEKSDFTRRCSLLSRYLKEKGSFGNIDLGLYRKPDSSLALPGKFDPPGKQNAMHKAGHSKGEPSTSSGGKVKDVADLSESQPGSSQLTIFFGGKVLVYNEFPVDKAKEIMEVAKQAKPVTEINIQTPINDENNNNKSSMVLPDLNEPTDNNHLTKEQQQQQEQNQIVERIARRASLHRFFAKRKDRAVARAPYQVNQNAGHHRYPPKPEIVTGQPLEAGQSSQRPPDNAIGQTMAHIKSDGDKDDIMKIEEGQSSKDLDLRL</sequence>
<reference key="1">
    <citation type="journal article" date="2000" name="Nature">
        <title>Sequence and analysis of chromosome 1 of the plant Arabidopsis thaliana.</title>
        <authorList>
            <person name="Theologis A."/>
            <person name="Ecker J.R."/>
            <person name="Palm C.J."/>
            <person name="Federspiel N.A."/>
            <person name="Kaul S."/>
            <person name="White O."/>
            <person name="Alonso J."/>
            <person name="Altafi H."/>
            <person name="Araujo R."/>
            <person name="Bowman C.L."/>
            <person name="Brooks S.Y."/>
            <person name="Buehler E."/>
            <person name="Chan A."/>
            <person name="Chao Q."/>
            <person name="Chen H."/>
            <person name="Cheuk R.F."/>
            <person name="Chin C.W."/>
            <person name="Chung M.K."/>
            <person name="Conn L."/>
            <person name="Conway A.B."/>
            <person name="Conway A.R."/>
            <person name="Creasy T.H."/>
            <person name="Dewar K."/>
            <person name="Dunn P."/>
            <person name="Etgu P."/>
            <person name="Feldblyum T.V."/>
            <person name="Feng J.-D."/>
            <person name="Fong B."/>
            <person name="Fujii C.Y."/>
            <person name="Gill J.E."/>
            <person name="Goldsmith A.D."/>
            <person name="Haas B."/>
            <person name="Hansen N.F."/>
            <person name="Hughes B."/>
            <person name="Huizar L."/>
            <person name="Hunter J.L."/>
            <person name="Jenkins J."/>
            <person name="Johnson-Hopson C."/>
            <person name="Khan S."/>
            <person name="Khaykin E."/>
            <person name="Kim C.J."/>
            <person name="Koo H.L."/>
            <person name="Kremenetskaia I."/>
            <person name="Kurtz D.B."/>
            <person name="Kwan A."/>
            <person name="Lam B."/>
            <person name="Langin-Hooper S."/>
            <person name="Lee A."/>
            <person name="Lee J.M."/>
            <person name="Lenz C.A."/>
            <person name="Li J.H."/>
            <person name="Li Y.-P."/>
            <person name="Lin X."/>
            <person name="Liu S.X."/>
            <person name="Liu Z.A."/>
            <person name="Luros J.S."/>
            <person name="Maiti R."/>
            <person name="Marziali A."/>
            <person name="Militscher J."/>
            <person name="Miranda M."/>
            <person name="Nguyen M."/>
            <person name="Nierman W.C."/>
            <person name="Osborne B.I."/>
            <person name="Pai G."/>
            <person name="Peterson J."/>
            <person name="Pham P.K."/>
            <person name="Rizzo M."/>
            <person name="Rooney T."/>
            <person name="Rowley D."/>
            <person name="Sakano H."/>
            <person name="Salzberg S.L."/>
            <person name="Schwartz J.R."/>
            <person name="Shinn P."/>
            <person name="Southwick A.M."/>
            <person name="Sun H."/>
            <person name="Tallon L.J."/>
            <person name="Tambunga G."/>
            <person name="Toriumi M.J."/>
            <person name="Town C.D."/>
            <person name="Utterback T."/>
            <person name="Van Aken S."/>
            <person name="Vaysberg M."/>
            <person name="Vysotskaia V.S."/>
            <person name="Walker M."/>
            <person name="Wu D."/>
            <person name="Yu G."/>
            <person name="Fraser C.M."/>
            <person name="Venter J.C."/>
            <person name="Davis R.W."/>
        </authorList>
    </citation>
    <scope>NUCLEOTIDE SEQUENCE [LARGE SCALE GENOMIC DNA]</scope>
    <source>
        <strain>cv. Columbia</strain>
    </source>
</reference>
<reference key="2">
    <citation type="journal article" date="2017" name="Plant J.">
        <title>Araport11: a complete reannotation of the Arabidopsis thaliana reference genome.</title>
        <authorList>
            <person name="Cheng C.Y."/>
            <person name="Krishnakumar V."/>
            <person name="Chan A.P."/>
            <person name="Thibaud-Nissen F."/>
            <person name="Schobel S."/>
            <person name="Town C.D."/>
        </authorList>
    </citation>
    <scope>GENOME REANNOTATION</scope>
    <source>
        <strain>cv. Columbia</strain>
    </source>
</reference>
<reference key="3">
    <citation type="journal article" date="2003" name="Science">
        <title>Empirical analysis of transcriptional activity in the Arabidopsis genome.</title>
        <authorList>
            <person name="Yamada K."/>
            <person name="Lim J."/>
            <person name="Dale J.M."/>
            <person name="Chen H."/>
            <person name="Shinn P."/>
            <person name="Palm C.J."/>
            <person name="Southwick A.M."/>
            <person name="Wu H.C."/>
            <person name="Kim C.J."/>
            <person name="Nguyen M."/>
            <person name="Pham P.K."/>
            <person name="Cheuk R.F."/>
            <person name="Karlin-Newmann G."/>
            <person name="Liu S.X."/>
            <person name="Lam B."/>
            <person name="Sakano H."/>
            <person name="Wu T."/>
            <person name="Yu G."/>
            <person name="Miranda M."/>
            <person name="Quach H.L."/>
            <person name="Tripp M."/>
            <person name="Chang C.H."/>
            <person name="Lee J.M."/>
            <person name="Toriumi M.J."/>
            <person name="Chan M.M."/>
            <person name="Tang C.C."/>
            <person name="Onodera C.S."/>
            <person name="Deng J.M."/>
            <person name="Akiyama K."/>
            <person name="Ansari Y."/>
            <person name="Arakawa T."/>
            <person name="Banh J."/>
            <person name="Banno F."/>
            <person name="Bowser L."/>
            <person name="Brooks S.Y."/>
            <person name="Carninci P."/>
            <person name="Chao Q."/>
            <person name="Choy N."/>
            <person name="Enju A."/>
            <person name="Goldsmith A.D."/>
            <person name="Gurjal M."/>
            <person name="Hansen N.F."/>
            <person name="Hayashizaki Y."/>
            <person name="Johnson-Hopson C."/>
            <person name="Hsuan V.W."/>
            <person name="Iida K."/>
            <person name="Karnes M."/>
            <person name="Khan S."/>
            <person name="Koesema E."/>
            <person name="Ishida J."/>
            <person name="Jiang P.X."/>
            <person name="Jones T."/>
            <person name="Kawai J."/>
            <person name="Kamiya A."/>
            <person name="Meyers C."/>
            <person name="Nakajima M."/>
            <person name="Narusaka M."/>
            <person name="Seki M."/>
            <person name="Sakurai T."/>
            <person name="Satou M."/>
            <person name="Tamse R."/>
            <person name="Vaysberg M."/>
            <person name="Wallender E.K."/>
            <person name="Wong C."/>
            <person name="Yamamura Y."/>
            <person name="Yuan S."/>
            <person name="Shinozaki K."/>
            <person name="Davis R.W."/>
            <person name="Theologis A."/>
            <person name="Ecker J.R."/>
        </authorList>
    </citation>
    <scope>NUCLEOTIDE SEQUENCE [LARGE SCALE MRNA]</scope>
    <source>
        <strain>cv. Columbia</strain>
    </source>
</reference>
<reference key="4">
    <citation type="submission" date="2002-03" db="EMBL/GenBank/DDBJ databases">
        <title>Full-length cDNA from Arabidopsis thaliana.</title>
        <authorList>
            <person name="Brover V.V."/>
            <person name="Troukhan M.E."/>
            <person name="Alexandrov N.A."/>
            <person name="Lu Y.-P."/>
            <person name="Flavell R.B."/>
            <person name="Feldmann K.A."/>
        </authorList>
    </citation>
    <scope>NUCLEOTIDE SEQUENCE [LARGE SCALE MRNA]</scope>
</reference>
<reference key="5">
    <citation type="journal article" date="2007" name="Nature">
        <title>JAZ repressor proteins are targets of the SCF(COI1) complex during jasmonate signalling.</title>
        <authorList>
            <person name="Thines B."/>
            <person name="Katsir L."/>
            <person name="Melotto M."/>
            <person name="Niu Y."/>
            <person name="Mandaokar A."/>
            <person name="Liu G."/>
            <person name="Nomura K."/>
            <person name="He S.Y."/>
            <person name="Howe G.A."/>
            <person name="Browse J."/>
        </authorList>
    </citation>
    <scope>INDUCTION BY JASMONATE</scope>
</reference>
<reference key="6">
    <citation type="journal article" date="2007" name="Nature">
        <title>The JAZ family of repressors is the missing link in jasmonate signalling.</title>
        <authorList>
            <person name="Chini A."/>
            <person name="Fonseca S."/>
            <person name="Fernandez G."/>
            <person name="Adie B."/>
            <person name="Chico J.M."/>
            <person name="Lorenzo O."/>
            <person name="Garcia-Casado G."/>
            <person name="Lopez-Vidriero I."/>
            <person name="Lozano F.M."/>
            <person name="Ponce M.R."/>
            <person name="Micol J.L."/>
            <person name="Solano R."/>
        </authorList>
    </citation>
    <scope>GENE FAMILY</scope>
    <scope>NOMENCLATURE</scope>
</reference>
<reference key="7">
    <citation type="journal article" date="2007" name="Plant Cell">
        <title>A downstream mediator in the growth repression limb of the jasmonate pathway.</title>
        <authorList>
            <person name="Yan Y."/>
            <person name="Stolz S."/>
            <person name="Chetelat A."/>
            <person name="Reymond P."/>
            <person name="Pagni M."/>
            <person name="Dubugnon L."/>
            <person name="Farmer E.E."/>
        </authorList>
    </citation>
    <scope>DOMAIN</scope>
</reference>
<reference key="8">
    <citation type="journal article" date="2007" name="Trends Plant Sci.">
        <title>The tify family previously known as ZIM.</title>
        <authorList>
            <person name="Vanholme B."/>
            <person name="Grunewald W."/>
            <person name="Bateman A."/>
            <person name="Kohchi T."/>
            <person name="Gheysen G."/>
        </authorList>
    </citation>
    <scope>GENE FAMILY</scope>
    <scope>NOMENCLATURE</scope>
</reference>
<reference key="9">
    <citation type="journal article" date="2008" name="Plant Physiol.">
        <title>Regulation and function of Arabidopsis JASMONATE ZIM-domain genes in response to wounding and herbivory.</title>
        <authorList>
            <person name="Chung H.S."/>
            <person name="Koo A.J."/>
            <person name="Gao X."/>
            <person name="Jayanty S."/>
            <person name="Thines B."/>
            <person name="Jones A.D."/>
            <person name="Howe G.A."/>
        </authorList>
    </citation>
    <scope>INDUCTION BY WOUNDING AND HERBIVORY</scope>
</reference>
<reference key="10">
    <citation type="journal article" date="2009" name="Plant Cell">
        <title>A critical role for the TIFY motif in repression of jasmonate signaling by a stabilized splice variant of the JASMONATE ZIM-domain protein JAZ10 in Arabidopsis.</title>
        <authorList>
            <person name="Chung H.S."/>
            <person name="Howe G.A."/>
        </authorList>
    </citation>
    <scope>FUNCTION</scope>
    <scope>INTERACTION WITH TIFY10A/JAZ1; TIFY10B/JAZ2; TIFY11B/JAZ6; TIFY5A/JAZ8 AND TIFY3B/JAZ12</scope>
    <scope>SUBUNIT</scope>
</reference>
<reference key="11">
    <citation type="journal article" date="2009" name="Plant J.">
        <title>The ZIM domain mediates homo- and heteromeric interactions between Arabidopsis JAZ proteins.</title>
        <authorList>
            <person name="Chini A."/>
            <person name="Fonseca S."/>
            <person name="Chico J.M."/>
            <person name="Fernandez-Calvo P."/>
            <person name="Solano R."/>
        </authorList>
    </citation>
    <scope>INTERACTION WITH MYC2</scope>
</reference>
<reference key="12">
    <citation type="journal article" date="2010" name="Nature">
        <title>NINJA connects the co-repressor TOPLESS to jasmonate signalling.</title>
        <authorList>
            <person name="Pauwels L."/>
            <person name="Barbero G.F."/>
            <person name="Geerinck J."/>
            <person name="Tilleman S."/>
            <person name="Grunewald W."/>
            <person name="Perez A.C."/>
            <person name="Chico J.M."/>
            <person name="Bossche R.V."/>
            <person name="Sewell J."/>
            <person name="Gil E."/>
            <person name="Garcia-Casado G."/>
            <person name="Witters E."/>
            <person name="Inze D."/>
            <person name="Long J.A."/>
            <person name="De Jaeger G."/>
            <person name="Solano R."/>
            <person name="Goossens A."/>
        </authorList>
    </citation>
    <scope>INTERACTION WITH AFPH2/NINJA</scope>
</reference>
<reference key="13">
    <citation type="journal article" date="2011" name="Plant Cell">
        <title>The Arabidopsis bHLH transcription factors MYC3 and MYC4 are targets of JAZ repressors and act additively with MYC2 in the activation of jasmonate responses.</title>
        <authorList>
            <person name="Fernandez-Calvo P."/>
            <person name="Chini A."/>
            <person name="Fernandez-Barbero G."/>
            <person name="Chico J.M."/>
            <person name="Gimenez-Ibanez S."/>
            <person name="Geerinck J."/>
            <person name="Eeckhout D."/>
            <person name="Schweizer F."/>
            <person name="Godoy M."/>
            <person name="Franco-Zorrilla J.M."/>
            <person name="Pauwels L."/>
            <person name="Witters E."/>
            <person name="Puga M.I."/>
            <person name="Paz-Ares J."/>
            <person name="Goossens A."/>
            <person name="Reymond P."/>
            <person name="De Jaeger G."/>
            <person name="Solano R."/>
        </authorList>
    </citation>
    <scope>FUNCTION</scope>
    <scope>INTERACTION WITH MYC2; MYC3; MYC4; TIFY10B/JAZ2; TIFY3B/JAZ12 AND AFPH2/NINJA</scope>
    <scope>SUBUNIT</scope>
</reference>
<reference key="14">
    <citation type="journal article" date="2013" name="PLoS Pathog.">
        <title>Bacterial effector activates jasmonate signaling by directly targeting JAZ transcriptional repressors.</title>
        <authorList>
            <person name="Jiang S."/>
            <person name="Yao J."/>
            <person name="Ma K.-W."/>
            <person name="Zhou H."/>
            <person name="Song J."/>
            <person name="He S.Y."/>
            <person name="Ma W."/>
        </authorList>
    </citation>
    <scope>INTERACTION WITH PSEUDOMONAS SYRINGAE HOPZ1A (MICROBIAL INFECTION)</scope>
    <source>
        <strain>cv. Columbia</strain>
    </source>
</reference>
<name>TI11A_ARATH</name>
<feature type="chain" id="PRO_0000300654" description="Protein TIFY 11A">
    <location>
        <begin position="1"/>
        <end position="274"/>
    </location>
</feature>
<feature type="domain" description="Tify" evidence="5">
    <location>
        <begin position="92"/>
        <end position="127"/>
    </location>
</feature>
<feature type="region of interest" description="Disordered" evidence="7">
    <location>
        <begin position="49"/>
        <end position="95"/>
    </location>
</feature>
<feature type="region of interest" description="Disordered" evidence="7">
    <location>
        <begin position="139"/>
        <end position="176"/>
    </location>
</feature>
<feature type="region of interest" description="Disordered" evidence="7">
    <location>
        <begin position="206"/>
        <end position="274"/>
    </location>
</feature>
<feature type="coiled-coil region" evidence="4">
    <location>
        <begin position="161"/>
        <end position="185"/>
    </location>
</feature>
<feature type="short sequence motif" description="Jas" evidence="4">
    <location>
        <begin position="182"/>
        <end position="206"/>
    </location>
</feature>
<feature type="short sequence motif" description="Nuclear localization signal" evidence="6">
    <location>
        <begin position="183"/>
        <end position="190"/>
    </location>
</feature>
<feature type="compositionally biased region" description="Polar residues" evidence="7">
    <location>
        <begin position="139"/>
        <end position="150"/>
    </location>
</feature>
<feature type="compositionally biased region" description="Basic and acidic residues" evidence="7">
    <location>
        <begin position="249"/>
        <end position="274"/>
    </location>
</feature>
<feature type="sequence conflict" description="In Ref. 4; AAM65191." evidence="18" ref="4">
    <original>S</original>
    <variation>L</variation>
    <location>
        <position position="97"/>
    </location>
</feature>
<feature type="sequence conflict" description="In Ref. 4; AAM65191." evidence="18" ref="4">
    <original>L</original>
    <variation>P</variation>
    <location>
        <position position="165"/>
    </location>
</feature>
<evidence type="ECO:0000250" key="1">
    <source>
        <dbReference type="UniProtKB" id="Q7XPM8"/>
    </source>
</evidence>
<evidence type="ECO:0000250" key="2">
    <source>
        <dbReference type="UniProtKB" id="Q9C9E3"/>
    </source>
</evidence>
<evidence type="ECO:0000250" key="3">
    <source>
        <dbReference type="UniProtKB" id="Q9LMA8"/>
    </source>
</evidence>
<evidence type="ECO:0000255" key="4"/>
<evidence type="ECO:0000255" key="5">
    <source>
        <dbReference type="PROSITE-ProRule" id="PRU00650"/>
    </source>
</evidence>
<evidence type="ECO:0000255" key="6">
    <source>
        <dbReference type="PROSITE-ProRule" id="PRU00768"/>
    </source>
</evidence>
<evidence type="ECO:0000256" key="7">
    <source>
        <dbReference type="SAM" id="MobiDB-lite"/>
    </source>
</evidence>
<evidence type="ECO:0000269" key="8">
    <source>
    </source>
</evidence>
<evidence type="ECO:0000269" key="9">
    <source>
    </source>
</evidence>
<evidence type="ECO:0000269" key="10">
    <source>
    </source>
</evidence>
<evidence type="ECO:0000269" key="11">
    <source>
    </source>
</evidence>
<evidence type="ECO:0000269" key="12">
    <source>
    </source>
</evidence>
<evidence type="ECO:0000269" key="13">
    <source>
    </source>
</evidence>
<evidence type="ECO:0000269" key="14">
    <source>
    </source>
</evidence>
<evidence type="ECO:0000303" key="15">
    <source>
    </source>
</evidence>
<evidence type="ECO:0000303" key="16">
    <source>
    </source>
</evidence>
<evidence type="ECO:0000303" key="17">
    <source>
    </source>
</evidence>
<evidence type="ECO:0000305" key="18"/>
<evidence type="ECO:0000312" key="19">
    <source>
        <dbReference type="Araport" id="AT1G17380"/>
    </source>
</evidence>
<evidence type="ECO:0000312" key="20">
    <source>
        <dbReference type="EMBL" id="AAF79491.1"/>
    </source>
</evidence>
<evidence type="ECO:0000312" key="21">
    <source>
        <dbReference type="EMBL" id="AAF97303.1"/>
    </source>
</evidence>
<dbReference type="EMBL" id="AC007843">
    <property type="protein sequence ID" value="AAF97303.1"/>
    <property type="molecule type" value="Genomic_DNA"/>
</dbReference>
<dbReference type="EMBL" id="AC022492">
    <property type="protein sequence ID" value="AAF79491.1"/>
    <property type="molecule type" value="Genomic_DNA"/>
</dbReference>
<dbReference type="EMBL" id="CP002684">
    <property type="protein sequence ID" value="AEE29581.1"/>
    <property type="molecule type" value="Genomic_DNA"/>
</dbReference>
<dbReference type="EMBL" id="BT000430">
    <property type="protein sequence ID" value="AAN17407.1"/>
    <property type="molecule type" value="mRNA"/>
</dbReference>
<dbReference type="EMBL" id="BT002543">
    <property type="protein sequence ID" value="AAO00903.1"/>
    <property type="molecule type" value="mRNA"/>
</dbReference>
<dbReference type="EMBL" id="AY087653">
    <property type="protein sequence ID" value="AAM65191.1"/>
    <property type="molecule type" value="mRNA"/>
</dbReference>
<dbReference type="RefSeq" id="NP_564019.1">
    <property type="nucleotide sequence ID" value="NM_101599.3"/>
</dbReference>
<dbReference type="SMR" id="Q9LDU5"/>
<dbReference type="BioGRID" id="23550">
    <property type="interactions" value="26"/>
</dbReference>
<dbReference type="DIP" id="DIP-53275N"/>
<dbReference type="ELM" id="Q9LDU5"/>
<dbReference type="FunCoup" id="Q9LDU5">
    <property type="interactions" value="296"/>
</dbReference>
<dbReference type="IntAct" id="Q9LDU5">
    <property type="interactions" value="15"/>
</dbReference>
<dbReference type="STRING" id="3702.Q9LDU5"/>
<dbReference type="PaxDb" id="3702-AT1G17380.1"/>
<dbReference type="EnsemblPlants" id="AT1G17380.1">
    <property type="protein sequence ID" value="AT1G17380.1"/>
    <property type="gene ID" value="AT1G17380"/>
</dbReference>
<dbReference type="GeneID" id="838310"/>
<dbReference type="Gramene" id="AT1G17380.1">
    <property type="protein sequence ID" value="AT1G17380.1"/>
    <property type="gene ID" value="AT1G17380"/>
</dbReference>
<dbReference type="KEGG" id="ath:AT1G17380"/>
<dbReference type="Araport" id="AT1G17380"/>
<dbReference type="TAIR" id="AT1G17380">
    <property type="gene designation" value="JAZ5"/>
</dbReference>
<dbReference type="eggNOG" id="ENOG502S4J6">
    <property type="taxonomic scope" value="Eukaryota"/>
</dbReference>
<dbReference type="HOGENOM" id="CLU_051749_1_0_1"/>
<dbReference type="InParanoid" id="Q9LDU5"/>
<dbReference type="OMA" id="MDINPQQ"/>
<dbReference type="PhylomeDB" id="Q9LDU5"/>
<dbReference type="PRO" id="PR:Q9LDU5"/>
<dbReference type="Proteomes" id="UP000006548">
    <property type="component" value="Chromosome 1"/>
</dbReference>
<dbReference type="ExpressionAtlas" id="Q9LDU5">
    <property type="expression patterns" value="baseline and differential"/>
</dbReference>
<dbReference type="GO" id="GO:0005634">
    <property type="term" value="C:nucleus"/>
    <property type="evidence" value="ECO:0007669"/>
    <property type="project" value="UniProtKB-SubCell"/>
</dbReference>
<dbReference type="GO" id="GO:0006952">
    <property type="term" value="P:defense response"/>
    <property type="evidence" value="ECO:0007669"/>
    <property type="project" value="UniProtKB-KW"/>
</dbReference>
<dbReference type="GO" id="GO:0009753">
    <property type="term" value="P:response to jasmonic acid"/>
    <property type="evidence" value="ECO:0000270"/>
    <property type="project" value="TAIR"/>
</dbReference>
<dbReference type="InterPro" id="IPR018467">
    <property type="entry name" value="CCT_CS"/>
</dbReference>
<dbReference type="InterPro" id="IPR040390">
    <property type="entry name" value="TIFY/JAZ"/>
</dbReference>
<dbReference type="InterPro" id="IPR010399">
    <property type="entry name" value="Tify_dom"/>
</dbReference>
<dbReference type="PANTHER" id="PTHR33077:SF146">
    <property type="entry name" value="PROTEIN TIFY 11A"/>
    <property type="match status" value="1"/>
</dbReference>
<dbReference type="PANTHER" id="PTHR33077">
    <property type="entry name" value="PROTEIN TIFY 4A-RELATED-RELATED"/>
    <property type="match status" value="1"/>
</dbReference>
<dbReference type="Pfam" id="PF09425">
    <property type="entry name" value="Jas_motif"/>
    <property type="match status" value="1"/>
</dbReference>
<dbReference type="Pfam" id="PF06200">
    <property type="entry name" value="tify"/>
    <property type="match status" value="1"/>
</dbReference>
<dbReference type="SMART" id="SM00979">
    <property type="entry name" value="TIFY"/>
    <property type="match status" value="1"/>
</dbReference>
<dbReference type="PROSITE" id="PS51320">
    <property type="entry name" value="TIFY"/>
    <property type="match status" value="1"/>
</dbReference>
<comment type="function">
    <text evidence="10 13">Repressor of jasmonate responses.</text>
</comment>
<comment type="subunit">
    <text evidence="10 11 12 13">Homo- and heterodimer. Interacts with MYC2, MYC3, MYC4, AFPH2/NINJA, TIFY10A/JAZ1, TIFY10B/JAZ2, TIFY11B/JAZ6, TIFY5A/JAZ8 and TIFY3B/JAZ12.</text>
</comment>
<comment type="subunit">
    <text evidence="14">(Microbial infection) Interacts with the pathogenic Pseudomonas syringae HopZ1a protein.</text>
</comment>
<comment type="interaction">
    <interactant intactId="EBI-2312095">
        <id>Q9LDU5</id>
    </interactant>
    <interactant intactId="EBI-1787005">
        <id>Q9SV55</id>
        <label>AFPH2</label>
    </interactant>
    <organismsDiffer>false</organismsDiffer>
    <experiments>10</experiments>
</comment>
<comment type="interaction">
    <interactant intactId="EBI-2312095">
        <id>Q9LDU5</id>
    </interactant>
    <interactant intactId="EBI-1100687">
        <id>Q9ZNV8</id>
        <label>AHP2</label>
    </interactant>
    <organismsDiffer>false</organismsDiffer>
    <experiments>3</experiments>
</comment>
<comment type="interaction">
    <interactant intactId="EBI-2312095">
        <id>Q9LDU5</id>
    </interactant>
    <interactant intactId="EBI-4434261">
        <id>Q9LNJ5</id>
        <label>BHLH13</label>
    </interactant>
    <organismsDiffer>false</organismsDiffer>
    <experiments>6</experiments>
</comment>
<comment type="interaction">
    <interactant intactId="EBI-2312095">
        <id>Q9LDU5</id>
    </interactant>
    <interactant intactId="EBI-1777952">
        <id>Q42290</id>
        <label>MPPbeta</label>
    </interactant>
    <organismsDiffer>false</organismsDiffer>
    <experiments>3</experiments>
</comment>
<comment type="interaction">
    <interactant intactId="EBI-2312095">
        <id>Q9LDU5</id>
    </interactant>
    <interactant intactId="EBI-1792336">
        <id>Q39204</id>
        <label>MYC2</label>
    </interactant>
    <organismsDiffer>false</organismsDiffer>
    <experiments>9</experiments>
</comment>
<comment type="interaction">
    <interactant intactId="EBI-2312095">
        <id>Q9LDU5</id>
    </interactant>
    <interactant intactId="EBI-15406909">
        <id>O49687</id>
        <label>MYC4</label>
    </interactant>
    <organismsDiffer>false</organismsDiffer>
    <experiments>3</experiments>
</comment>
<comment type="interaction">
    <interactant intactId="EBI-2312095">
        <id>Q9LDU5</id>
    </interactant>
    <interactant intactId="EBI-4426144">
        <id>Q9C9L2</id>
        <label>TCP15</label>
    </interactant>
    <organismsDiffer>false</organismsDiffer>
    <experiments>3</experiments>
</comment>
<comment type="interaction">
    <interactant intactId="EBI-2312095">
        <id>Q9LDU5</id>
    </interactant>
    <interactant intactId="EBI-16093655">
        <id>Q83YM6</id>
        <label>avrPphE</label>
    </interactant>
    <organismsDiffer>true</organismsDiffer>
    <experiments>3</experiments>
</comment>
<comment type="subcellular location">
    <subcellularLocation>
        <location evidence="6">Nucleus</location>
    </subcellularLocation>
</comment>
<comment type="induction">
    <text evidence="3">(Microbial infection) Triggered to degradation by the pathogenic Pseudomonas syringae HopZ1a protein in a COI1-dependent manner, thereby activating host jasmonate signaling.</text>
</comment>
<comment type="induction">
    <text evidence="8 9">Up-regulated by jasmonate, wounding and herbivory.</text>
</comment>
<comment type="domain">
    <text evidence="1 2">The jas domain (182-206) is required for interaction with COI1 and Pseudomonas syringae HopZ1a.</text>
</comment>
<comment type="PTM">
    <text evidence="2">(Microbial infection) Acetylated by Pseudomonas syringae HopZ1a.</text>
</comment>
<comment type="PTM">
    <text evidence="1">Ubiquitinated. Targeted for degradation by the SCF(COI1) E3 ubiquitin ligase-proteasome pathway during jasmonate signaling.</text>
</comment>
<comment type="similarity">
    <text evidence="18">Belongs to the TIFY/JAZ family.</text>
</comment>
<gene>
    <name evidence="15" type="primary">TIFY11A</name>
    <name evidence="16 17" type="synonym">JAZ5</name>
    <name evidence="19" type="ordered locus">At1g17380</name>
    <name evidence="20" type="ORF">F1L3.3</name>
    <name evidence="21" type="ORF">F28G4.16</name>
</gene>
<accession>Q9LDU5</accession>
<accession>Q8LAR9</accession>
<proteinExistence type="evidence at protein level"/>
<keyword id="KW-0007">Acetylation</keyword>
<keyword id="KW-0175">Coiled coil</keyword>
<keyword id="KW-1184">Jasmonic acid signaling pathway</keyword>
<keyword id="KW-0539">Nucleus</keyword>
<keyword id="KW-0611">Plant defense</keyword>
<keyword id="KW-1185">Reference proteome</keyword>
<keyword id="KW-0804">Transcription</keyword>
<keyword id="KW-0805">Transcription regulation</keyword>
<keyword id="KW-0832">Ubl conjugation</keyword>